<protein>
    <recommendedName>
        <fullName>Plant intracellular Ras-group-related LRR protein 2</fullName>
    </recommendedName>
</protein>
<keyword id="KW-0175">Coiled coil</keyword>
<keyword id="KW-0433">Leucine-rich repeat</keyword>
<keyword id="KW-1185">Reference proteome</keyword>
<keyword id="KW-0677">Repeat</keyword>
<sequence length="471" mass="52596">MDHDLDKFPLLSYVLHQHDSNLHAPPSMAAQETLLPSFPLLSNPEIMSMLTQSIPTTITQTLFVFNSLGSRPDPLAVSSARFKIAQIMDSLSPEEAAKESEIYAGVVRLDEVHDSYEKKLKDTEEELSRVYSTEVESMLRSGEEVNEKVLAVLKEAESGGTVERIDLSSQELKLIPEAFWKVVGLVYLNLSGNDLTFIPDAISKLKKLEELDVSSNSLESLPDSIGMLLNLRILNVNANNLTALPESIAHCRSLVELDASYNNLTSLPTNIGYGLQNLERLSIQLNKLRYFPGSISEMYNLKYLDAHMNEIHGIPNSIGRLTKLEVLNLSSNFNNLMGVPDTITDLTNLRELDLSNNQIQAIPDSFYRLRKLEKLNLDQNPLEIPSQEVATQGAEVVREFMRKRWGDIMAEQQQRIGVEAERHGDENGWVYWGTSMVTNLVSGVTHTIGFGGATSDGGDKKPGDSYFYHQI</sequence>
<feature type="chain" id="PRO_0000423602" description="Plant intracellular Ras-group-related LRR protein 2">
    <location>
        <begin position="1"/>
        <end position="471"/>
    </location>
</feature>
<feature type="repeat" description="LRR 1">
    <location>
        <begin position="159"/>
        <end position="182"/>
    </location>
</feature>
<feature type="repeat" description="LRR 2">
    <location>
        <begin position="183"/>
        <end position="205"/>
    </location>
</feature>
<feature type="repeat" description="LRR 3">
    <location>
        <begin position="206"/>
        <end position="229"/>
    </location>
</feature>
<feature type="repeat" description="LRR 4">
    <location>
        <begin position="231"/>
        <end position="251"/>
    </location>
</feature>
<feature type="repeat" description="LRR 5">
    <location>
        <begin position="253"/>
        <end position="275"/>
    </location>
</feature>
<feature type="repeat" description="LRR 6">
    <location>
        <begin position="276"/>
        <end position="298"/>
    </location>
</feature>
<feature type="repeat" description="LRR 7">
    <location>
        <begin position="300"/>
        <end position="321"/>
    </location>
</feature>
<feature type="repeat" description="LRR 8">
    <location>
        <begin position="324"/>
        <end position="346"/>
    </location>
</feature>
<feature type="repeat" description="LRR 9">
    <location>
        <begin position="347"/>
        <end position="369"/>
    </location>
</feature>
<feature type="repeat" description="LRR 10">
    <location>
        <begin position="371"/>
        <end position="392"/>
    </location>
</feature>
<feature type="coiled-coil region" evidence="2">
    <location>
        <begin position="106"/>
        <end position="133"/>
    </location>
</feature>
<feature type="short sequence motif" description="GVYW; degenerate">
    <location>
        <begin position="393"/>
        <end position="405"/>
    </location>
</feature>
<name>PIRL2_ARATH</name>
<dbReference type="EMBL" id="AY849572">
    <property type="protein sequence ID" value="AAW57411.1"/>
    <property type="molecule type" value="mRNA"/>
</dbReference>
<dbReference type="EMBL" id="AB028611">
    <property type="protein sequence ID" value="BAB01830.1"/>
    <property type="molecule type" value="Genomic_DNA"/>
</dbReference>
<dbReference type="EMBL" id="CP002686">
    <property type="protein sequence ID" value="AEE77167.1"/>
    <property type="molecule type" value="Genomic_DNA"/>
</dbReference>
<dbReference type="EMBL" id="AK119000">
    <property type="protein sequence ID" value="BAC43576.1"/>
    <property type="molecule type" value="mRNA"/>
</dbReference>
<dbReference type="EMBL" id="BT006050">
    <property type="protein sequence ID" value="AAP04035.1"/>
    <property type="molecule type" value="mRNA"/>
</dbReference>
<dbReference type="RefSeq" id="NP_189281.2">
    <property type="nucleotide sequence ID" value="NM_113557.3"/>
</dbReference>
<dbReference type="SMR" id="Q9LRV8"/>
<dbReference type="FunCoup" id="Q9LRV8">
    <property type="interactions" value="11"/>
</dbReference>
<dbReference type="STRING" id="3702.Q9LRV8"/>
<dbReference type="iPTMnet" id="Q9LRV8"/>
<dbReference type="PaxDb" id="3702-AT3G26500.1"/>
<dbReference type="ProteomicsDB" id="236741"/>
<dbReference type="EnsemblPlants" id="AT3G26500.1">
    <property type="protein sequence ID" value="AT3G26500.1"/>
    <property type="gene ID" value="AT3G26500"/>
</dbReference>
<dbReference type="GeneID" id="822257"/>
<dbReference type="Gramene" id="AT3G26500.1">
    <property type="protein sequence ID" value="AT3G26500.1"/>
    <property type="gene ID" value="AT3G26500"/>
</dbReference>
<dbReference type="KEGG" id="ath:AT3G26500"/>
<dbReference type="Araport" id="AT3G26500"/>
<dbReference type="TAIR" id="AT3G26500">
    <property type="gene designation" value="PIRL2"/>
</dbReference>
<dbReference type="eggNOG" id="KOG0619">
    <property type="taxonomic scope" value="Eukaryota"/>
</dbReference>
<dbReference type="HOGENOM" id="CLU_021557_0_0_1"/>
<dbReference type="InParanoid" id="Q9LRV8"/>
<dbReference type="OMA" id="MRVPDAI"/>
<dbReference type="PhylomeDB" id="Q9LRV8"/>
<dbReference type="PRO" id="PR:Q9LRV8"/>
<dbReference type="Proteomes" id="UP000006548">
    <property type="component" value="Chromosome 3"/>
</dbReference>
<dbReference type="ExpressionAtlas" id="Q9LRV8">
    <property type="expression patterns" value="baseline and differential"/>
</dbReference>
<dbReference type="GO" id="GO:0055046">
    <property type="term" value="P:microgametogenesis"/>
    <property type="evidence" value="ECO:0000316"/>
    <property type="project" value="TAIR"/>
</dbReference>
<dbReference type="FunFam" id="3.80.10.10:FF:000746">
    <property type="entry name" value="Plant intracellular Ras-group-related LRR protein 2"/>
    <property type="match status" value="1"/>
</dbReference>
<dbReference type="FunFam" id="3.80.10.10:FF:000610">
    <property type="entry name" value="Plant intracellular Ras-group-related LRR protein 9"/>
    <property type="match status" value="1"/>
</dbReference>
<dbReference type="Gene3D" id="3.80.10.10">
    <property type="entry name" value="Ribonuclease Inhibitor"/>
    <property type="match status" value="2"/>
</dbReference>
<dbReference type="InterPro" id="IPR001611">
    <property type="entry name" value="Leu-rich_rpt"/>
</dbReference>
<dbReference type="InterPro" id="IPR003591">
    <property type="entry name" value="Leu-rich_rpt_typical-subtyp"/>
</dbReference>
<dbReference type="InterPro" id="IPR032675">
    <property type="entry name" value="LRR_dom_sf"/>
</dbReference>
<dbReference type="InterPro" id="IPR050216">
    <property type="entry name" value="LRR_domain-containing"/>
</dbReference>
<dbReference type="InterPro" id="IPR055414">
    <property type="entry name" value="LRR_R13L4/SHOC2-like"/>
</dbReference>
<dbReference type="PANTHER" id="PTHR48051">
    <property type="match status" value="1"/>
</dbReference>
<dbReference type="PANTHER" id="PTHR48051:SF54">
    <property type="entry name" value="LEUCINE-RICH REPEAT-CONTAINING PROTEIN"/>
    <property type="match status" value="1"/>
</dbReference>
<dbReference type="Pfam" id="PF23598">
    <property type="entry name" value="LRR_14"/>
    <property type="match status" value="1"/>
</dbReference>
<dbReference type="Pfam" id="PF13855">
    <property type="entry name" value="LRR_8"/>
    <property type="match status" value="1"/>
</dbReference>
<dbReference type="PRINTS" id="PR00019">
    <property type="entry name" value="LEURICHRPT"/>
</dbReference>
<dbReference type="SMART" id="SM00364">
    <property type="entry name" value="LRR_BAC"/>
    <property type="match status" value="6"/>
</dbReference>
<dbReference type="SMART" id="SM00365">
    <property type="entry name" value="LRR_SD22"/>
    <property type="match status" value="3"/>
</dbReference>
<dbReference type="SMART" id="SM00369">
    <property type="entry name" value="LRR_TYP"/>
    <property type="match status" value="8"/>
</dbReference>
<dbReference type="SUPFAM" id="SSF52058">
    <property type="entry name" value="L domain-like"/>
    <property type="match status" value="1"/>
</dbReference>
<dbReference type="PROSITE" id="PS51450">
    <property type="entry name" value="LRR"/>
    <property type="match status" value="9"/>
</dbReference>
<evidence type="ECO:0000250" key="1"/>
<evidence type="ECO:0000255" key="2"/>
<evidence type="ECO:0000269" key="3">
    <source>
    </source>
</evidence>
<evidence type="ECO:0000305" key="4"/>
<accession>Q9LRV8</accession>
<proteinExistence type="evidence at transcript level"/>
<reference key="1">
    <citation type="journal article" date="2005" name="Plant Cell Physiol.">
        <title>PIRLs: a novel class of plant intracellular leucine-rich repeat proteins.</title>
        <authorList>
            <person name="Forsthoefel N.R."/>
            <person name="Cutler K."/>
            <person name="Port M.D."/>
            <person name="Yamamoto T."/>
            <person name="Vernon D.M."/>
        </authorList>
    </citation>
    <scope>NUCLEOTIDE SEQUENCE [MRNA]</scope>
    <scope>GENE FAMILY</scope>
    <scope>MOTIF GVYW</scope>
    <scope>TISSUE SPECIFICITY</scope>
</reference>
<reference key="2">
    <citation type="journal article" date="2000" name="DNA Res.">
        <title>Structural analysis of Arabidopsis thaliana chromosome 3. I. Sequence features of the regions of 4,504,864 bp covered by sixty P1 and TAC clones.</title>
        <authorList>
            <person name="Sato S."/>
            <person name="Nakamura Y."/>
            <person name="Kaneko T."/>
            <person name="Katoh T."/>
            <person name="Asamizu E."/>
            <person name="Tabata S."/>
        </authorList>
    </citation>
    <scope>NUCLEOTIDE SEQUENCE [LARGE SCALE GENOMIC DNA]</scope>
    <source>
        <strain>cv. Columbia</strain>
    </source>
</reference>
<reference key="3">
    <citation type="journal article" date="2017" name="Plant J.">
        <title>Araport11: a complete reannotation of the Arabidopsis thaliana reference genome.</title>
        <authorList>
            <person name="Cheng C.Y."/>
            <person name="Krishnakumar V."/>
            <person name="Chan A.P."/>
            <person name="Thibaud-Nissen F."/>
            <person name="Schobel S."/>
            <person name="Town C.D."/>
        </authorList>
    </citation>
    <scope>GENOME REANNOTATION</scope>
    <source>
        <strain>cv. Columbia</strain>
    </source>
</reference>
<reference key="4">
    <citation type="journal article" date="2002" name="Science">
        <title>Functional annotation of a full-length Arabidopsis cDNA collection.</title>
        <authorList>
            <person name="Seki M."/>
            <person name="Narusaka M."/>
            <person name="Kamiya A."/>
            <person name="Ishida J."/>
            <person name="Satou M."/>
            <person name="Sakurai T."/>
            <person name="Nakajima M."/>
            <person name="Enju A."/>
            <person name="Akiyama K."/>
            <person name="Oono Y."/>
            <person name="Muramatsu M."/>
            <person name="Hayashizaki Y."/>
            <person name="Kawai J."/>
            <person name="Carninci P."/>
            <person name="Itoh M."/>
            <person name="Ishii Y."/>
            <person name="Arakawa T."/>
            <person name="Shibata K."/>
            <person name="Shinagawa A."/>
            <person name="Shinozaki K."/>
        </authorList>
    </citation>
    <scope>NUCLEOTIDE SEQUENCE [LARGE SCALE MRNA]</scope>
    <source>
        <strain>cv. Columbia</strain>
    </source>
</reference>
<reference key="5">
    <citation type="journal article" date="2003" name="Science">
        <title>Empirical analysis of transcriptional activity in the Arabidopsis genome.</title>
        <authorList>
            <person name="Yamada K."/>
            <person name="Lim J."/>
            <person name="Dale J.M."/>
            <person name="Chen H."/>
            <person name="Shinn P."/>
            <person name="Palm C.J."/>
            <person name="Southwick A.M."/>
            <person name="Wu H.C."/>
            <person name="Kim C.J."/>
            <person name="Nguyen M."/>
            <person name="Pham P.K."/>
            <person name="Cheuk R.F."/>
            <person name="Karlin-Newmann G."/>
            <person name="Liu S.X."/>
            <person name="Lam B."/>
            <person name="Sakano H."/>
            <person name="Wu T."/>
            <person name="Yu G."/>
            <person name="Miranda M."/>
            <person name="Quach H.L."/>
            <person name="Tripp M."/>
            <person name="Chang C.H."/>
            <person name="Lee J.M."/>
            <person name="Toriumi M.J."/>
            <person name="Chan M.M."/>
            <person name="Tang C.C."/>
            <person name="Onodera C.S."/>
            <person name="Deng J.M."/>
            <person name="Akiyama K."/>
            <person name="Ansari Y."/>
            <person name="Arakawa T."/>
            <person name="Banh J."/>
            <person name="Banno F."/>
            <person name="Bowser L."/>
            <person name="Brooks S.Y."/>
            <person name="Carninci P."/>
            <person name="Chao Q."/>
            <person name="Choy N."/>
            <person name="Enju A."/>
            <person name="Goldsmith A.D."/>
            <person name="Gurjal M."/>
            <person name="Hansen N.F."/>
            <person name="Hayashizaki Y."/>
            <person name="Johnson-Hopson C."/>
            <person name="Hsuan V.W."/>
            <person name="Iida K."/>
            <person name="Karnes M."/>
            <person name="Khan S."/>
            <person name="Koesema E."/>
            <person name="Ishida J."/>
            <person name="Jiang P.X."/>
            <person name="Jones T."/>
            <person name="Kawai J."/>
            <person name="Kamiya A."/>
            <person name="Meyers C."/>
            <person name="Nakajima M."/>
            <person name="Narusaka M."/>
            <person name="Seki M."/>
            <person name="Sakurai T."/>
            <person name="Satou M."/>
            <person name="Tamse R."/>
            <person name="Vaysberg M."/>
            <person name="Wallender E.K."/>
            <person name="Wong C."/>
            <person name="Yamamura Y."/>
            <person name="Yuan S."/>
            <person name="Shinozaki K."/>
            <person name="Davis R.W."/>
            <person name="Theologis A."/>
            <person name="Ecker J.R."/>
        </authorList>
    </citation>
    <scope>NUCLEOTIDE SEQUENCE [LARGE SCALE MRNA]</scope>
    <source>
        <strain>cv. Columbia</strain>
    </source>
</reference>
<gene>
    <name type="primary">PIRL2</name>
    <name type="ordered locus">At3g26500</name>
    <name type="ORF">MFE16.1</name>
</gene>
<comment type="function">
    <text evidence="1">Leucine-rich repeat protein that likely mediates protein interactions, possibly in the context of signal transduction.</text>
</comment>
<comment type="tissue specificity">
    <text evidence="3">Widely expressed but preferentially in roots.</text>
</comment>
<comment type="similarity">
    <text evidence="4">Belongs to the SHOC2 family.</text>
</comment>
<organism>
    <name type="scientific">Arabidopsis thaliana</name>
    <name type="common">Mouse-ear cress</name>
    <dbReference type="NCBI Taxonomy" id="3702"/>
    <lineage>
        <taxon>Eukaryota</taxon>
        <taxon>Viridiplantae</taxon>
        <taxon>Streptophyta</taxon>
        <taxon>Embryophyta</taxon>
        <taxon>Tracheophyta</taxon>
        <taxon>Spermatophyta</taxon>
        <taxon>Magnoliopsida</taxon>
        <taxon>eudicotyledons</taxon>
        <taxon>Gunneridae</taxon>
        <taxon>Pentapetalae</taxon>
        <taxon>rosids</taxon>
        <taxon>malvids</taxon>
        <taxon>Brassicales</taxon>
        <taxon>Brassicaceae</taxon>
        <taxon>Camelineae</taxon>
        <taxon>Arabidopsis</taxon>
    </lineage>
</organism>